<protein>
    <recommendedName>
        <fullName evidence="11">Non-reducing polyketide synthase rads2</fullName>
        <shortName evidence="11">NR-PKS rads2</shortName>
        <ecNumber evidence="12">2.3.1.-</ecNumber>
    </recommendedName>
    <alternativeName>
        <fullName evidence="11">Radicicol biosynthesis cluster protein s2</fullName>
    </alternativeName>
</protein>
<name>RADS2_FLOCH</name>
<feature type="chain" id="PRO_0000443055" description="Non-reducing polyketide synthase rads2">
    <location>
        <begin position="1"/>
        <end position="2138"/>
    </location>
</feature>
<feature type="domain" description="Ketosynthase family 3 (KS3)" evidence="6 12">
    <location>
        <begin position="373"/>
        <end position="804"/>
    </location>
</feature>
<feature type="domain" description="PKS/mFAS DH" evidence="7">
    <location>
        <begin position="1291"/>
        <end position="1610"/>
    </location>
</feature>
<feature type="domain" description="Carrier" evidence="5 12">
    <location>
        <begin position="1666"/>
        <end position="1740"/>
    </location>
</feature>
<feature type="region of interest" description="N-terminal acylcarrier protein transacylase (SAT) domain" evidence="4 12">
    <location>
        <begin position="11"/>
        <end position="249"/>
    </location>
</feature>
<feature type="region of interest" description="Malonyl-CoA:ACP transacylase (MAT) domain" evidence="4 12">
    <location>
        <begin position="901"/>
        <end position="1184"/>
    </location>
</feature>
<feature type="region of interest" description="N-terminal hotdog fold" evidence="7">
    <location>
        <begin position="1291"/>
        <end position="1437"/>
    </location>
</feature>
<feature type="region of interest" description="Product template (PT) domain" evidence="4 12">
    <location>
        <begin position="1303"/>
        <end position="1607"/>
    </location>
</feature>
<feature type="region of interest" description="C-terminal hotdog fold" evidence="7">
    <location>
        <begin position="1459"/>
        <end position="1610"/>
    </location>
</feature>
<feature type="region of interest" description="Disordered" evidence="9">
    <location>
        <begin position="1618"/>
        <end position="1666"/>
    </location>
</feature>
<feature type="region of interest" description="Disordered" evidence="9">
    <location>
        <begin position="1740"/>
        <end position="1781"/>
    </location>
</feature>
<feature type="region of interest" description="Disordered" evidence="9">
    <location>
        <begin position="1807"/>
        <end position="1828"/>
    </location>
</feature>
<feature type="region of interest" description="Thioesterase (TE) domain" evidence="4 12">
    <location>
        <begin position="1860"/>
        <end position="2006"/>
    </location>
</feature>
<feature type="compositionally biased region" description="Low complexity" evidence="9">
    <location>
        <begin position="1740"/>
        <end position="1771"/>
    </location>
</feature>
<feature type="active site" description="For beta-ketoacyl synthase activity" evidence="6">
    <location>
        <position position="549"/>
    </location>
</feature>
<feature type="active site" description="For beta-ketoacyl synthase activity" evidence="6">
    <location>
        <position position="684"/>
    </location>
</feature>
<feature type="active site" description="For beta-ketoacyl synthase activity" evidence="6">
    <location>
        <position position="724"/>
    </location>
</feature>
<feature type="active site" description="For acyl/malonyl transferase activity" evidence="8">
    <location>
        <position position="992"/>
    </location>
</feature>
<feature type="modified residue" description="O-(pantetheine 4'-phosphoryl)serine" evidence="5">
    <location>
        <position position="1700"/>
    </location>
</feature>
<proteinExistence type="inferred from homology"/>
<keyword id="KW-0012">Acyltransferase</keyword>
<keyword id="KW-0511">Multifunctional enzyme</keyword>
<keyword id="KW-0596">Phosphopantetheine</keyword>
<keyword id="KW-0597">Phosphoprotein</keyword>
<keyword id="KW-0808">Transferase</keyword>
<reference key="1">
    <citation type="journal article" date="2008" name="Chem. Biol.">
        <title>Functional characterization of the biosynthesis of radicicol, an Hsp90 inhibitor resorcylic acid lactone from Chaetomium chiversii.</title>
        <authorList>
            <person name="Wang S."/>
            <person name="Xu Y."/>
            <person name="Maine E.A."/>
            <person name="Wijeratne E.M."/>
            <person name="Espinosa-Artiles P."/>
            <person name="Gunatilaka A.A."/>
            <person name="Molnar I."/>
        </authorList>
    </citation>
    <scope>NUCLEOTIDE SEQUENCE [GENOMIC DNA]</scope>
    <scope>FUNCTION</scope>
    <scope>DISRUPTION PHENOTYPE</scope>
    <scope>DOMAIN</scope>
    <source>
        <strain>CS-36-62</strain>
    </source>
</reference>
<gene>
    <name evidence="11" type="primary">radS2</name>
</gene>
<organism>
    <name type="scientific">Floropilus chiversii</name>
    <name type="common">Chaetomium chiversii</name>
    <dbReference type="NCBI Taxonomy" id="2587399"/>
    <lineage>
        <taxon>Eukaryota</taxon>
        <taxon>Fungi</taxon>
        <taxon>Dikarya</taxon>
        <taxon>Ascomycota</taxon>
        <taxon>Pezizomycotina</taxon>
        <taxon>Sordariomycetes</taxon>
        <taxon>Sordariomycetidae</taxon>
        <taxon>Sordariales</taxon>
        <taxon>Chaetomiaceae</taxon>
        <taxon>Floropilus</taxon>
    </lineage>
</organism>
<evidence type="ECO:0000250" key="1">
    <source>
        <dbReference type="UniProtKB" id="B3FWT6"/>
    </source>
</evidence>
<evidence type="ECO:0000250" key="2">
    <source>
        <dbReference type="UniProtKB" id="Q5ATJ7"/>
    </source>
</evidence>
<evidence type="ECO:0000250" key="3">
    <source>
        <dbReference type="UniProtKB" id="Q5B0D0"/>
    </source>
</evidence>
<evidence type="ECO:0000255" key="4"/>
<evidence type="ECO:0000255" key="5">
    <source>
        <dbReference type="PROSITE-ProRule" id="PRU00258"/>
    </source>
</evidence>
<evidence type="ECO:0000255" key="6">
    <source>
        <dbReference type="PROSITE-ProRule" id="PRU01348"/>
    </source>
</evidence>
<evidence type="ECO:0000255" key="7">
    <source>
        <dbReference type="PROSITE-ProRule" id="PRU01363"/>
    </source>
</evidence>
<evidence type="ECO:0000255" key="8">
    <source>
        <dbReference type="PROSITE-ProRule" id="PRU10022"/>
    </source>
</evidence>
<evidence type="ECO:0000256" key="9">
    <source>
        <dbReference type="SAM" id="MobiDB-lite"/>
    </source>
</evidence>
<evidence type="ECO:0000269" key="10">
    <source>
    </source>
</evidence>
<evidence type="ECO:0000303" key="11">
    <source>
    </source>
</evidence>
<evidence type="ECO:0000305" key="12">
    <source>
    </source>
</evidence>
<accession>C5H882</accession>
<dbReference type="EC" id="2.3.1.-" evidence="12"/>
<dbReference type="EMBL" id="EU980390">
    <property type="protein sequence ID" value="ACM42403.1"/>
    <property type="molecule type" value="Genomic_DNA"/>
</dbReference>
<dbReference type="SMR" id="C5H882"/>
<dbReference type="ESTHER" id="floch-rads2">
    <property type="family name" value="Thioesterase"/>
</dbReference>
<dbReference type="GO" id="GO:0004315">
    <property type="term" value="F:3-oxoacyl-[acyl-carrier-protein] synthase activity"/>
    <property type="evidence" value="ECO:0007669"/>
    <property type="project" value="InterPro"/>
</dbReference>
<dbReference type="GO" id="GO:0004312">
    <property type="term" value="F:fatty acid synthase activity"/>
    <property type="evidence" value="ECO:0007669"/>
    <property type="project" value="TreeGrafter"/>
</dbReference>
<dbReference type="GO" id="GO:0031177">
    <property type="term" value="F:phosphopantetheine binding"/>
    <property type="evidence" value="ECO:0007669"/>
    <property type="project" value="InterPro"/>
</dbReference>
<dbReference type="GO" id="GO:0006633">
    <property type="term" value="P:fatty acid biosynthetic process"/>
    <property type="evidence" value="ECO:0007669"/>
    <property type="project" value="InterPro"/>
</dbReference>
<dbReference type="GO" id="GO:0044550">
    <property type="term" value="P:secondary metabolite biosynthetic process"/>
    <property type="evidence" value="ECO:0007669"/>
    <property type="project" value="TreeGrafter"/>
</dbReference>
<dbReference type="CDD" id="cd00833">
    <property type="entry name" value="PKS"/>
    <property type="match status" value="1"/>
</dbReference>
<dbReference type="Gene3D" id="3.30.70.3290">
    <property type="match status" value="1"/>
</dbReference>
<dbReference type="Gene3D" id="3.40.47.10">
    <property type="match status" value="1"/>
</dbReference>
<dbReference type="Gene3D" id="1.10.1200.10">
    <property type="entry name" value="ACP-like"/>
    <property type="match status" value="1"/>
</dbReference>
<dbReference type="Gene3D" id="3.40.50.1820">
    <property type="entry name" value="alpha/beta hydrolase"/>
    <property type="match status" value="1"/>
</dbReference>
<dbReference type="Gene3D" id="3.30.70.250">
    <property type="entry name" value="Malonyl-CoA ACP transacylase, ACP-binding"/>
    <property type="match status" value="1"/>
</dbReference>
<dbReference type="Gene3D" id="3.40.366.10">
    <property type="entry name" value="Malonyl-Coenzyme A Acyl Carrier Protein, domain 2"/>
    <property type="match status" value="1"/>
</dbReference>
<dbReference type="Gene3D" id="3.10.129.110">
    <property type="entry name" value="Polyketide synthase dehydratase"/>
    <property type="match status" value="1"/>
</dbReference>
<dbReference type="InterPro" id="IPR029058">
    <property type="entry name" value="AB_hydrolase_fold"/>
</dbReference>
<dbReference type="InterPro" id="IPR001227">
    <property type="entry name" value="Ac_transferase_dom_sf"/>
</dbReference>
<dbReference type="InterPro" id="IPR036736">
    <property type="entry name" value="ACP-like_sf"/>
</dbReference>
<dbReference type="InterPro" id="IPR014043">
    <property type="entry name" value="Acyl_transferase_dom"/>
</dbReference>
<dbReference type="InterPro" id="IPR016035">
    <property type="entry name" value="Acyl_Trfase/lysoPLipase"/>
</dbReference>
<dbReference type="InterPro" id="IPR018201">
    <property type="entry name" value="Ketoacyl_synth_AS"/>
</dbReference>
<dbReference type="InterPro" id="IPR014031">
    <property type="entry name" value="Ketoacyl_synth_C"/>
</dbReference>
<dbReference type="InterPro" id="IPR014030">
    <property type="entry name" value="Ketoacyl_synth_N"/>
</dbReference>
<dbReference type="InterPro" id="IPR016036">
    <property type="entry name" value="Malonyl_transacylase_ACP-bd"/>
</dbReference>
<dbReference type="InterPro" id="IPR020841">
    <property type="entry name" value="PKS_Beta-ketoAc_synthase_dom"/>
</dbReference>
<dbReference type="InterPro" id="IPR042104">
    <property type="entry name" value="PKS_dehydratase_sf"/>
</dbReference>
<dbReference type="InterPro" id="IPR049900">
    <property type="entry name" value="PKS_mFAS_DH"/>
</dbReference>
<dbReference type="InterPro" id="IPR050091">
    <property type="entry name" value="PKS_NRPS_Biosynth_Enz"/>
</dbReference>
<dbReference type="InterPro" id="IPR020806">
    <property type="entry name" value="PKS_PP-bd"/>
</dbReference>
<dbReference type="InterPro" id="IPR020802">
    <property type="entry name" value="PKS_thioesterase"/>
</dbReference>
<dbReference type="InterPro" id="IPR009081">
    <property type="entry name" value="PP-bd_ACP"/>
</dbReference>
<dbReference type="InterPro" id="IPR006162">
    <property type="entry name" value="Ppantetheine_attach_site"/>
</dbReference>
<dbReference type="InterPro" id="IPR030918">
    <property type="entry name" value="PT_fungal_PKS"/>
</dbReference>
<dbReference type="InterPro" id="IPR032088">
    <property type="entry name" value="SAT"/>
</dbReference>
<dbReference type="InterPro" id="IPR001031">
    <property type="entry name" value="Thioesterase"/>
</dbReference>
<dbReference type="InterPro" id="IPR016039">
    <property type="entry name" value="Thiolase-like"/>
</dbReference>
<dbReference type="NCBIfam" id="TIGR04532">
    <property type="entry name" value="PT_fungal_PKS"/>
    <property type="match status" value="1"/>
</dbReference>
<dbReference type="PANTHER" id="PTHR43775">
    <property type="entry name" value="FATTY ACID SYNTHASE"/>
    <property type="match status" value="1"/>
</dbReference>
<dbReference type="PANTHER" id="PTHR43775:SF37">
    <property type="entry name" value="SI:DKEY-61P9.11"/>
    <property type="match status" value="1"/>
</dbReference>
<dbReference type="Pfam" id="PF00698">
    <property type="entry name" value="Acyl_transf_1"/>
    <property type="match status" value="1"/>
</dbReference>
<dbReference type="Pfam" id="PF22621">
    <property type="entry name" value="CurL-like_PKS_C"/>
    <property type="match status" value="1"/>
</dbReference>
<dbReference type="Pfam" id="PF00109">
    <property type="entry name" value="ketoacyl-synt"/>
    <property type="match status" value="1"/>
</dbReference>
<dbReference type="Pfam" id="PF02801">
    <property type="entry name" value="Ketoacyl-synt_C"/>
    <property type="match status" value="1"/>
</dbReference>
<dbReference type="Pfam" id="PF00550">
    <property type="entry name" value="PP-binding"/>
    <property type="match status" value="1"/>
</dbReference>
<dbReference type="Pfam" id="PF16073">
    <property type="entry name" value="SAT"/>
    <property type="match status" value="1"/>
</dbReference>
<dbReference type="Pfam" id="PF00975">
    <property type="entry name" value="Thioesterase"/>
    <property type="match status" value="1"/>
</dbReference>
<dbReference type="SMART" id="SM00827">
    <property type="entry name" value="PKS_AT"/>
    <property type="match status" value="1"/>
</dbReference>
<dbReference type="SMART" id="SM00825">
    <property type="entry name" value="PKS_KS"/>
    <property type="match status" value="1"/>
</dbReference>
<dbReference type="SMART" id="SM00823">
    <property type="entry name" value="PKS_PP"/>
    <property type="match status" value="1"/>
</dbReference>
<dbReference type="SMART" id="SM01294">
    <property type="entry name" value="PKS_PP_betabranch"/>
    <property type="match status" value="1"/>
</dbReference>
<dbReference type="SMART" id="SM00824">
    <property type="entry name" value="PKS_TE"/>
    <property type="match status" value="1"/>
</dbReference>
<dbReference type="SUPFAM" id="SSF47336">
    <property type="entry name" value="ACP-like"/>
    <property type="match status" value="1"/>
</dbReference>
<dbReference type="SUPFAM" id="SSF53474">
    <property type="entry name" value="alpha/beta-Hydrolases"/>
    <property type="match status" value="1"/>
</dbReference>
<dbReference type="SUPFAM" id="SSF52151">
    <property type="entry name" value="FabD/lysophospholipase-like"/>
    <property type="match status" value="1"/>
</dbReference>
<dbReference type="SUPFAM" id="SSF55048">
    <property type="entry name" value="Probable ACP-binding domain of malonyl-CoA ACP transacylase"/>
    <property type="match status" value="1"/>
</dbReference>
<dbReference type="SUPFAM" id="SSF53901">
    <property type="entry name" value="Thiolase-like"/>
    <property type="match status" value="1"/>
</dbReference>
<dbReference type="PROSITE" id="PS50075">
    <property type="entry name" value="CARRIER"/>
    <property type="match status" value="1"/>
</dbReference>
<dbReference type="PROSITE" id="PS00606">
    <property type="entry name" value="KS3_1"/>
    <property type="match status" value="1"/>
</dbReference>
<dbReference type="PROSITE" id="PS52004">
    <property type="entry name" value="KS3_2"/>
    <property type="match status" value="1"/>
</dbReference>
<dbReference type="PROSITE" id="PS00012">
    <property type="entry name" value="PHOSPHOPANTETHEINE"/>
    <property type="match status" value="1"/>
</dbReference>
<dbReference type="PROSITE" id="PS52019">
    <property type="entry name" value="PKS_MFAS_DH"/>
    <property type="match status" value="1"/>
</dbReference>
<sequence>MRLPQKTKTVLIFGDQTDSWLDGLDQVYKQAGSTPWLQSFLDDLTDAINAETKANMLDHALQESLGTFSTLQELGERYRHTTDELGMAHALLLHAVRAATLLQWVKREPNLLGRDGQAEWLGISGGLITLSARAISEDFDTLRNASLEVARLFVRLCKFTSVRSRAAEDAPGTWGWAVVGISPDELRKRLDEFQQSAGIPSIKRAQVGVTGAGWSTVIGPPSVLEIVMKQCPAVKSLAKNPLNIHALQHTIKLSPADLNFIVGNNSAFLDLPLCCPGMNLWGMDEPGATYANWGEMLKAICEQVLSRSLDIPHAVGKVNTKLDGVETIRVIQIGTTSHAPYLLGGLKGPGRHVSVQDAQSLLQASVSTSSSQSGRIAIVGMAGRGPGCDNVDEFWDLIMSKQDLCREVPKDRFDVDEYYCPNHGQGDKKCTMTTRFGCFMDKPGNFDSRFFHISPREAMLMDPGHRQFLMSTYEALEMAGYSDGHAKATDPTRIAAFYGQVSDDWHDQSHPTLGCDSYTLQGVQRAFGPGRIAWQFKWEGPTYSLDSACASTTSSIHLACMSLLSKDIDMAVAGAANILSFPHSFTCLSKAGVLSDTGNCKTYRDDADGYCRADFVGTVVLKRLEDAVAHNDNILAVVLSSGRNHSGNSTSITTSDAGAQERLFRKVLRNAHVHPDDVSYVEMHGTGTQVGDPAEVGAVGNLFKHRRPADGPIPVGSVKANFGHSEAAAGMASLLKCIKMFQTDTIPPQAGMPHALNPRFPPLSELNIKIPSEPKAFEKLSKPRRILLNNFDAAGGNACMLLEDYSDTAGTKGADPRSSHVVATSARTQAAHHANRRRLLEWLRANPTVSIEDVAYTTTARRMHHPHRFACTASSTQELIAKLEDSIDARDTKSSPPSPIVFVFGGQGSHYGGMGSELYRTSPRFRETVDLCANICEEHGFPSFLHLVTDDGIDMSTATTVQTQLAVLVLEIGLAAFWKSVGVQPSMVVGHSLGEYAALHVAGVLSLVDVLYLVGRRALLLLERCEEGAFTMLAVSMTATAALDFLQSHPQYSSCSVSCINSPTATVISGSTEQIAQLQADLTGHSKALPVPYGFHSFQMDSVLADYCTLAEGVTFSAPKIPVASTLLGSVVNKHGTFNGRYLSQQMRQAVDFVGALNVIKQKLADPIWLELGPKGVCTSFVRATFSPSSSTAEKTLSTLAGPGPGADNKAASWPPISKCLAALYMQGIAIDWLALHEPYTSCLKMVTLPSYAWDMKDYWITYTDANKNAEAAALSPAATPTAQQMISTCAQYVVQESPSSSKKIQVTFRASLAESGFGAIIGGHRMQREPICPGSAFCEAGFAAAAYVLEANSRKDDAHIAKLVLRHPTMTRPLTKNLVGPDGELLTTVIMEDASSNEIQVSWRASSAPSKGGLSYDLGSCVLEVRKDVQRLQADWDRTSYFVKARMDEVVRTAQDGHGHRFQPDIFYILFAPTVEYDSQYKCIKEAYVSSDFSEAVAEIELREDPSSTRFMASPYWGESIVHLAGFTVNANPENHLTASGTSFINSGFENFEQTVAFEAGKTYFTYVRVSRKDKGTRSCEVFVFDSDSRMIAQCSGLEFHEISNATLKQVLSGGKSKSVLKPDNAAPLKAPEKKEDATPTAPKKSADPGKEEEEEGDTATPAAVGEFEVIIQTIAIETGMDTSELTDDSALADLGVDSIMAIEVAARVSNATGRELTPSFVSEYPTIGDLRRAFAMAPSSSSSTSASESVSESLDDSSSTSRSATPSSSMKETEAGFVEDDSLRKKPVISAAAAVVTAAGVAETQATKVQPQAPAATAADNDSSPAPSVRIMLLQGRPAKSRGAADGSHAPPPFYMIADGTGSIATYIHLASSLQSKMPIYGIDSPFLRCPDRLTPEVGIPGAARLIVDALLKKQPDKDVPFWIGGFSGGAMVAYEVCRQLSAAGRPVDGLLLIDMCAPRQVAAVPEDDGEVGLAMFDAVSGQDESGVWSATDGTRRHLGAMFSCVATYNPEPLPPRGGGNTPAKRAAMIWARKGMIDRCVSSVRFRQMLADRGISPEPYPGFMEDPKLGAVAWSLPHKTGADLGPNGWERYLGGDRLLCMSIEADHLEMPTPGYAQLLGETMDKAFRYFRDGLMD</sequence>
<comment type="function">
    <text evidence="1 10">Non-reducing polyketide synthase; part of the gene cluster that mediates the biosynthesis of radicicol, a resorcylic acid lactone (RAL) that irreversibly inhibits the HSP90 molecular chaperone, an important target for cancer chemotherapy (PubMed:19101477). The cluster encodes only two apparent post-PKS enzymes, a cytochrome P450 monooxygenase (radP) and a non-heme halogenase (radH) that introduce the epoxide and the chlorine, respectively (PubMed:19101477). If this cluster includes all the genes required for radicicol biosynthesis, the remaining structural features of radicicol are presumably generated by the PKSs rads1 and rads2 (PubMed:19101477). The C-2' ketone could arise if the R-PKS rads1 and NR-PKS rads2 each carry out four iterations, in contrast to the five iteration-three iteration split for the hypothemycin PKSs (By similarity). The origin of the cis 5',6' double bond is not known (By similarity). The radicicol R-PKS rads1 ER domain may catalyze either double bond isomerization or reduction in the third iteration (By similarity).</text>
</comment>
<comment type="pathway">
    <text evidence="10">Secondary metabolite biosynthesis.</text>
</comment>
<comment type="domain">
    <text evidence="3 12">Multidomain protein; including a starter unit:ACP transacylase (SAT) that selects the starter unit; a ketosynthase (KS) that catalyzes repeated decarboxylative condensation to elongate the polyketide backbone; a malonyl-CoA:ACP transacylase (MAT) that selects and transfers the extender unit malonyl-CoA; a product template (PT) domain that controls the immediate cyclization regioselectivity of the reactive polyketide backbone; and an acyl-carrier protein (ACP) that serves as the tether of the growing and completed polyketide via its phosphopantetheinyl arm (By similarity).</text>
</comment>
<comment type="domain">
    <text evidence="2">The release of the polyketide chain from the non-reducing polyketide synthase is mediated by the thioesterase (TE) domain localized at the C-ter of the protein (By similarity).</text>
</comment>
<comment type="disruption phenotype">
    <text evidence="10">Completely abolishes the production of radicicol (PubMed:19101477).</text>
</comment>
<comment type="biotechnology">
    <text evidence="12">Radicicol is an important pharmacophore as an inhibitor of heat shock protein 90 (Hsp90), an ATP-dependent chaperone involved in the post-translational maturation and stabilization of over one hundred proteins, and which activity has been implicated in diverse pathologies ranging from oncology to neurodegenerative and infectious diseases (PubMed:19101477).</text>
</comment>